<keyword id="KW-0150">Chloroplast</keyword>
<keyword id="KW-0472">Membrane</keyword>
<keyword id="KW-0602">Photosynthesis</keyword>
<keyword id="KW-0604">Photosystem II</keyword>
<keyword id="KW-0934">Plastid</keyword>
<keyword id="KW-0674">Reaction center</keyword>
<keyword id="KW-0793">Thylakoid</keyword>
<keyword id="KW-0812">Transmembrane</keyword>
<keyword id="KW-1133">Transmembrane helix</keyword>
<dbReference type="EMBL" id="X13326">
    <property type="protein sequence ID" value="CAA31701.1"/>
    <property type="molecule type" value="Genomic_DNA"/>
</dbReference>
<dbReference type="PIR" id="S03194">
    <property type="entry name" value="S03194"/>
</dbReference>
<dbReference type="RefSeq" id="YP_008239185.1">
    <property type="nucleotide sequence ID" value="NC_021761.1"/>
</dbReference>
<dbReference type="SMR" id="P19053"/>
<dbReference type="GeneID" id="16792720"/>
<dbReference type="GO" id="GO:0009535">
    <property type="term" value="C:chloroplast thylakoid membrane"/>
    <property type="evidence" value="ECO:0007669"/>
    <property type="project" value="UniProtKB-SubCell"/>
</dbReference>
<dbReference type="GO" id="GO:0009539">
    <property type="term" value="C:photosystem II reaction center"/>
    <property type="evidence" value="ECO:0007669"/>
    <property type="project" value="InterPro"/>
</dbReference>
<dbReference type="GO" id="GO:0015979">
    <property type="term" value="P:photosynthesis"/>
    <property type="evidence" value="ECO:0007669"/>
    <property type="project" value="UniProtKB-UniRule"/>
</dbReference>
<dbReference type="Gene3D" id="6.10.250.2070">
    <property type="match status" value="1"/>
</dbReference>
<dbReference type="HAMAP" id="MF_01305">
    <property type="entry name" value="PSII_PsbJ"/>
    <property type="match status" value="1"/>
</dbReference>
<dbReference type="InterPro" id="IPR002682">
    <property type="entry name" value="PSII_PsbJ"/>
</dbReference>
<dbReference type="InterPro" id="IPR037267">
    <property type="entry name" value="PSII_PsbJ_sf"/>
</dbReference>
<dbReference type="NCBIfam" id="NF002722">
    <property type="entry name" value="PRK02565.1"/>
    <property type="match status" value="1"/>
</dbReference>
<dbReference type="PANTHER" id="PTHR34812">
    <property type="entry name" value="PHOTOSYSTEM II REACTION CENTER PROTEIN J"/>
    <property type="match status" value="1"/>
</dbReference>
<dbReference type="PANTHER" id="PTHR34812:SF3">
    <property type="entry name" value="PHOTOSYSTEM II REACTION CENTER PROTEIN J"/>
    <property type="match status" value="1"/>
</dbReference>
<dbReference type="Pfam" id="PF01788">
    <property type="entry name" value="PsbJ"/>
    <property type="match status" value="1"/>
</dbReference>
<dbReference type="SUPFAM" id="SSF161021">
    <property type="entry name" value="Photosystem II reaction center protein J, PsbJ"/>
    <property type="match status" value="1"/>
</dbReference>
<reference key="1">
    <citation type="journal article" date="1989" name="Nucleic Acids Res.">
        <title>Nucleotide sequence of the rye chloroplast DNA fragment, comprising psbE and psbF genes.</title>
        <authorList>
            <person name="Zolotarev A.S."/>
            <person name="Kolosov V.L."/>
        </authorList>
    </citation>
    <scope>NUCLEOTIDE SEQUENCE [GENOMIC DNA]</scope>
</reference>
<reference key="2">
    <citation type="journal article" date="1989" name="Bioorg. Khim.">
        <title>Photosystem II of rye. Nucleotide sequence of genes psbE, psbF, psbL and OPC40 of chloroplast DNA.</title>
        <authorList>
            <person name="Kolosov V.L."/>
            <person name="Klezovich O.N."/>
            <person name="Abdulaev N.G."/>
            <person name="Zolosharev A.S."/>
        </authorList>
    </citation>
    <scope>NUCLEOTIDE SEQUENCE [GENOMIC DNA]</scope>
</reference>
<evidence type="ECO:0000255" key="1">
    <source>
        <dbReference type="HAMAP-Rule" id="MF_01305"/>
    </source>
</evidence>
<gene>
    <name evidence="1" type="primary">psbJ</name>
</gene>
<geneLocation type="chloroplast"/>
<sequence length="40" mass="4061">MADTTGRIPLWLIGTVAGIAVIGLVGVFFYGSYSGLGSSL</sequence>
<protein>
    <recommendedName>
        <fullName evidence="1">Photosystem II reaction center protein J</fullName>
        <shortName evidence="1">PSII-J</shortName>
    </recommendedName>
</protein>
<feature type="chain" id="PRO_0000216618" description="Photosystem II reaction center protein J">
    <location>
        <begin position="1"/>
        <end position="40"/>
    </location>
</feature>
<feature type="transmembrane region" description="Helical" evidence="1">
    <location>
        <begin position="8"/>
        <end position="28"/>
    </location>
</feature>
<accession>P19053</accession>
<comment type="function">
    <text evidence="1">One of the components of the core complex of photosystem II (PSII). PSII is a light-driven water:plastoquinone oxidoreductase that uses light energy to abstract electrons from H(2)O, generating O(2) and a proton gradient subsequently used for ATP formation. It consists of a core antenna complex that captures photons, and an electron transfer chain that converts photonic excitation into a charge separation.</text>
</comment>
<comment type="subunit">
    <text evidence="1">PSII is composed of 1 copy each of membrane proteins PsbA, PsbB, PsbC, PsbD, PsbE, PsbF, PsbH, PsbI, PsbJ, PsbK, PsbL, PsbM, PsbT, PsbX, PsbY, PsbZ, Psb30/Ycf12, at least 3 peripheral proteins of the oxygen-evolving complex and a large number of cofactors. It forms dimeric complexes.</text>
</comment>
<comment type="subcellular location">
    <subcellularLocation>
        <location evidence="1">Plastid</location>
        <location evidence="1">Chloroplast thylakoid membrane</location>
        <topology evidence="1">Single-pass membrane protein</topology>
    </subcellularLocation>
</comment>
<comment type="similarity">
    <text evidence="1">Belongs to the PsbJ family.</text>
</comment>
<proteinExistence type="inferred from homology"/>
<name>PSBJ_SECCE</name>
<organism>
    <name type="scientific">Secale cereale</name>
    <name type="common">Rye</name>
    <dbReference type="NCBI Taxonomy" id="4550"/>
    <lineage>
        <taxon>Eukaryota</taxon>
        <taxon>Viridiplantae</taxon>
        <taxon>Streptophyta</taxon>
        <taxon>Embryophyta</taxon>
        <taxon>Tracheophyta</taxon>
        <taxon>Spermatophyta</taxon>
        <taxon>Magnoliopsida</taxon>
        <taxon>Liliopsida</taxon>
        <taxon>Poales</taxon>
        <taxon>Poaceae</taxon>
        <taxon>BOP clade</taxon>
        <taxon>Pooideae</taxon>
        <taxon>Triticodae</taxon>
        <taxon>Triticeae</taxon>
        <taxon>Hordeinae</taxon>
        <taxon>Secale</taxon>
    </lineage>
</organism>